<accession>B1JLM2</accession>
<keyword id="KW-0030">Aminoacyl-tRNA synthetase</keyword>
<keyword id="KW-0067">ATP-binding</keyword>
<keyword id="KW-0963">Cytoplasm</keyword>
<keyword id="KW-0436">Ligase</keyword>
<keyword id="KW-0547">Nucleotide-binding</keyword>
<keyword id="KW-0648">Protein biosynthesis</keyword>
<evidence type="ECO:0000255" key="1">
    <source>
        <dbReference type="HAMAP-Rule" id="MF_00123"/>
    </source>
</evidence>
<proteinExistence type="inferred from homology"/>
<protein>
    <recommendedName>
        <fullName evidence="1">Arginine--tRNA ligase</fullName>
        <ecNumber evidence="1">6.1.1.19</ecNumber>
    </recommendedName>
    <alternativeName>
        <fullName evidence="1">Arginyl-tRNA synthetase</fullName>
        <shortName evidence="1">ArgRS</shortName>
    </alternativeName>
</protein>
<dbReference type="EC" id="6.1.1.19" evidence="1"/>
<dbReference type="EMBL" id="CP000950">
    <property type="protein sequence ID" value="ACA68441.1"/>
    <property type="molecule type" value="Genomic_DNA"/>
</dbReference>
<dbReference type="RefSeq" id="WP_012304111.1">
    <property type="nucleotide sequence ID" value="NZ_CP009792.1"/>
</dbReference>
<dbReference type="SMR" id="B1JLM2"/>
<dbReference type="KEGG" id="ypy:YPK_2155"/>
<dbReference type="PATRIC" id="fig|502800.11.peg.2829"/>
<dbReference type="GO" id="GO:0005737">
    <property type="term" value="C:cytoplasm"/>
    <property type="evidence" value="ECO:0007669"/>
    <property type="project" value="UniProtKB-SubCell"/>
</dbReference>
<dbReference type="GO" id="GO:0004814">
    <property type="term" value="F:arginine-tRNA ligase activity"/>
    <property type="evidence" value="ECO:0007669"/>
    <property type="project" value="UniProtKB-UniRule"/>
</dbReference>
<dbReference type="GO" id="GO:0005524">
    <property type="term" value="F:ATP binding"/>
    <property type="evidence" value="ECO:0007669"/>
    <property type="project" value="UniProtKB-UniRule"/>
</dbReference>
<dbReference type="GO" id="GO:0006420">
    <property type="term" value="P:arginyl-tRNA aminoacylation"/>
    <property type="evidence" value="ECO:0007669"/>
    <property type="project" value="UniProtKB-UniRule"/>
</dbReference>
<dbReference type="CDD" id="cd07956">
    <property type="entry name" value="Anticodon_Ia_Arg"/>
    <property type="match status" value="1"/>
</dbReference>
<dbReference type="CDD" id="cd00671">
    <property type="entry name" value="ArgRS_core"/>
    <property type="match status" value="1"/>
</dbReference>
<dbReference type="FunFam" id="1.10.730.10:FF:000001">
    <property type="entry name" value="Arginine--tRNA ligase"/>
    <property type="match status" value="1"/>
</dbReference>
<dbReference type="FunFam" id="3.30.1360.70:FF:000001">
    <property type="entry name" value="Arginine--tRNA ligase"/>
    <property type="match status" value="1"/>
</dbReference>
<dbReference type="FunFam" id="3.40.50.620:FF:000030">
    <property type="entry name" value="Arginine--tRNA ligase"/>
    <property type="match status" value="1"/>
</dbReference>
<dbReference type="Gene3D" id="3.30.1360.70">
    <property type="entry name" value="Arginyl tRNA synthetase N-terminal domain"/>
    <property type="match status" value="1"/>
</dbReference>
<dbReference type="Gene3D" id="3.40.50.620">
    <property type="entry name" value="HUPs"/>
    <property type="match status" value="1"/>
</dbReference>
<dbReference type="Gene3D" id="1.10.730.10">
    <property type="entry name" value="Isoleucyl-tRNA Synthetase, Domain 1"/>
    <property type="match status" value="1"/>
</dbReference>
<dbReference type="HAMAP" id="MF_00123">
    <property type="entry name" value="Arg_tRNA_synth"/>
    <property type="match status" value="1"/>
</dbReference>
<dbReference type="InterPro" id="IPR001412">
    <property type="entry name" value="aa-tRNA-synth_I_CS"/>
</dbReference>
<dbReference type="InterPro" id="IPR001278">
    <property type="entry name" value="Arg-tRNA-ligase"/>
</dbReference>
<dbReference type="InterPro" id="IPR005148">
    <property type="entry name" value="Arg-tRNA-synth_N"/>
</dbReference>
<dbReference type="InterPro" id="IPR036695">
    <property type="entry name" value="Arg-tRNA-synth_N_sf"/>
</dbReference>
<dbReference type="InterPro" id="IPR035684">
    <property type="entry name" value="ArgRS_core"/>
</dbReference>
<dbReference type="InterPro" id="IPR008909">
    <property type="entry name" value="DALR_anticod-bd"/>
</dbReference>
<dbReference type="InterPro" id="IPR014729">
    <property type="entry name" value="Rossmann-like_a/b/a_fold"/>
</dbReference>
<dbReference type="InterPro" id="IPR009080">
    <property type="entry name" value="tRNAsynth_Ia_anticodon-bd"/>
</dbReference>
<dbReference type="NCBIfam" id="TIGR00456">
    <property type="entry name" value="argS"/>
    <property type="match status" value="1"/>
</dbReference>
<dbReference type="PANTHER" id="PTHR11956:SF5">
    <property type="entry name" value="ARGININE--TRNA LIGASE, CYTOPLASMIC"/>
    <property type="match status" value="1"/>
</dbReference>
<dbReference type="PANTHER" id="PTHR11956">
    <property type="entry name" value="ARGINYL-TRNA SYNTHETASE"/>
    <property type="match status" value="1"/>
</dbReference>
<dbReference type="Pfam" id="PF03485">
    <property type="entry name" value="Arg_tRNA_synt_N"/>
    <property type="match status" value="1"/>
</dbReference>
<dbReference type="Pfam" id="PF05746">
    <property type="entry name" value="DALR_1"/>
    <property type="match status" value="1"/>
</dbReference>
<dbReference type="Pfam" id="PF00750">
    <property type="entry name" value="tRNA-synt_1d"/>
    <property type="match status" value="1"/>
</dbReference>
<dbReference type="PRINTS" id="PR01038">
    <property type="entry name" value="TRNASYNTHARG"/>
</dbReference>
<dbReference type="SMART" id="SM01016">
    <property type="entry name" value="Arg_tRNA_synt_N"/>
    <property type="match status" value="1"/>
</dbReference>
<dbReference type="SMART" id="SM00836">
    <property type="entry name" value="DALR_1"/>
    <property type="match status" value="1"/>
</dbReference>
<dbReference type="SUPFAM" id="SSF47323">
    <property type="entry name" value="Anticodon-binding domain of a subclass of class I aminoacyl-tRNA synthetases"/>
    <property type="match status" value="1"/>
</dbReference>
<dbReference type="SUPFAM" id="SSF55190">
    <property type="entry name" value="Arginyl-tRNA synthetase (ArgRS), N-terminal 'additional' domain"/>
    <property type="match status" value="1"/>
</dbReference>
<dbReference type="SUPFAM" id="SSF52374">
    <property type="entry name" value="Nucleotidylyl transferase"/>
    <property type="match status" value="1"/>
</dbReference>
<dbReference type="PROSITE" id="PS00178">
    <property type="entry name" value="AA_TRNA_LIGASE_I"/>
    <property type="match status" value="1"/>
</dbReference>
<comment type="catalytic activity">
    <reaction evidence="1">
        <text>tRNA(Arg) + L-arginine + ATP = L-arginyl-tRNA(Arg) + AMP + diphosphate</text>
        <dbReference type="Rhea" id="RHEA:20301"/>
        <dbReference type="Rhea" id="RHEA-COMP:9658"/>
        <dbReference type="Rhea" id="RHEA-COMP:9673"/>
        <dbReference type="ChEBI" id="CHEBI:30616"/>
        <dbReference type="ChEBI" id="CHEBI:32682"/>
        <dbReference type="ChEBI" id="CHEBI:33019"/>
        <dbReference type="ChEBI" id="CHEBI:78442"/>
        <dbReference type="ChEBI" id="CHEBI:78513"/>
        <dbReference type="ChEBI" id="CHEBI:456215"/>
        <dbReference type="EC" id="6.1.1.19"/>
    </reaction>
</comment>
<comment type="subunit">
    <text evidence="1">Monomer.</text>
</comment>
<comment type="subcellular location">
    <subcellularLocation>
        <location evidence="1">Cytoplasm</location>
    </subcellularLocation>
</comment>
<comment type="similarity">
    <text evidence="1">Belongs to the class-I aminoacyl-tRNA synthetase family.</text>
</comment>
<name>SYR_YERPY</name>
<reference key="1">
    <citation type="submission" date="2008-02" db="EMBL/GenBank/DDBJ databases">
        <title>Complete sequence of Yersinia pseudotuberculosis YPIII.</title>
        <authorList>
            <consortium name="US DOE Joint Genome Institute"/>
            <person name="Copeland A."/>
            <person name="Lucas S."/>
            <person name="Lapidus A."/>
            <person name="Glavina del Rio T."/>
            <person name="Dalin E."/>
            <person name="Tice H."/>
            <person name="Bruce D."/>
            <person name="Goodwin L."/>
            <person name="Pitluck S."/>
            <person name="Munk A.C."/>
            <person name="Brettin T."/>
            <person name="Detter J.C."/>
            <person name="Han C."/>
            <person name="Tapia R."/>
            <person name="Schmutz J."/>
            <person name="Larimer F."/>
            <person name="Land M."/>
            <person name="Hauser L."/>
            <person name="Challacombe J.F."/>
            <person name="Green L."/>
            <person name="Lindler L.E."/>
            <person name="Nikolich M.P."/>
            <person name="Richardson P."/>
        </authorList>
    </citation>
    <scope>NUCLEOTIDE SEQUENCE [LARGE SCALE GENOMIC DNA]</scope>
    <source>
        <strain>YPIII</strain>
    </source>
</reference>
<gene>
    <name evidence="1" type="primary">argS</name>
    <name type="ordered locus">YPK_2155</name>
</gene>
<organism>
    <name type="scientific">Yersinia pseudotuberculosis serotype O:3 (strain YPIII)</name>
    <dbReference type="NCBI Taxonomy" id="502800"/>
    <lineage>
        <taxon>Bacteria</taxon>
        <taxon>Pseudomonadati</taxon>
        <taxon>Pseudomonadota</taxon>
        <taxon>Gammaproteobacteria</taxon>
        <taxon>Enterobacterales</taxon>
        <taxon>Yersiniaceae</taxon>
        <taxon>Yersinia</taxon>
    </lineage>
</organism>
<sequence>MNIQALLSDKVSQALIAAGAPADCEAQVRQSAKAQFGDYQANGVMAVAKKLGMQPRQLAERVVELLDLTGIASKIEIAGPGFINIFLDRQWVAEKVEYALTAPKLGVTPVEPQTIVVDYSAPNVAKQMHVGHLRSTIIGDAAVRTLAFLGHNVIRANHVGDWGTQFGMLIAYLEKMQNENASDMGLSDLELFYQQAKKTYDEDEEFALRARAYVVKLQSGDEYCRQMWRKLVDITMAQNQVAYDRLNVTLTKDDVMGESLYNAMLPEIVADLKAKGLAVESEGATVVYLDEYKNKDGEPMGVIIQKKDGGYLYTTTDIACAKYRYETLGADRILYYIDSRQHQHLMQAWTIVRKAGYVPESVPLEHHMFGMMLGKDGKPFKTRSGGTVKLSDLLDEAVERAGKLIAEKNPDMPADELKQVINAVGIGAVKYADLSKSRTTDYIFDWDNMLALDGNTAPYMQYAYTRVVSVFRRAGVDESSLTLPLVITEDREAALATRLLQFEEIITTVAREGTPHVMCSYLYDLAGLFSSFYEHCQILNAESEEIRQSRLKLAMLTAKTLKQGLDTLGIQTVERM</sequence>
<feature type="chain" id="PRO_1000095427" description="Arginine--tRNA ligase">
    <location>
        <begin position="1"/>
        <end position="576"/>
    </location>
</feature>
<feature type="short sequence motif" description="'HIGH' region">
    <location>
        <begin position="122"/>
        <end position="132"/>
    </location>
</feature>